<proteinExistence type="inferred from homology"/>
<accession>Q089Q7</accession>
<dbReference type="EMBL" id="CP000447">
    <property type="protein sequence ID" value="ABI70008.1"/>
    <property type="molecule type" value="Genomic_DNA"/>
</dbReference>
<dbReference type="RefSeq" id="WP_011635637.1">
    <property type="nucleotide sequence ID" value="NC_008345.1"/>
</dbReference>
<dbReference type="SMR" id="Q089Q7"/>
<dbReference type="STRING" id="318167.Sfri_0145"/>
<dbReference type="KEGG" id="sfr:Sfri_0145"/>
<dbReference type="eggNOG" id="COG0480">
    <property type="taxonomic scope" value="Bacteria"/>
</dbReference>
<dbReference type="HOGENOM" id="CLU_002794_4_1_6"/>
<dbReference type="OrthoDB" id="9804431at2"/>
<dbReference type="Proteomes" id="UP000000684">
    <property type="component" value="Chromosome"/>
</dbReference>
<dbReference type="GO" id="GO:0005737">
    <property type="term" value="C:cytoplasm"/>
    <property type="evidence" value="ECO:0007669"/>
    <property type="project" value="UniProtKB-SubCell"/>
</dbReference>
<dbReference type="GO" id="GO:0005525">
    <property type="term" value="F:GTP binding"/>
    <property type="evidence" value="ECO:0007669"/>
    <property type="project" value="UniProtKB-UniRule"/>
</dbReference>
<dbReference type="GO" id="GO:0003924">
    <property type="term" value="F:GTPase activity"/>
    <property type="evidence" value="ECO:0007669"/>
    <property type="project" value="InterPro"/>
</dbReference>
<dbReference type="GO" id="GO:0097216">
    <property type="term" value="F:guanosine tetraphosphate binding"/>
    <property type="evidence" value="ECO:0007669"/>
    <property type="project" value="UniProtKB-ARBA"/>
</dbReference>
<dbReference type="GO" id="GO:0003746">
    <property type="term" value="F:translation elongation factor activity"/>
    <property type="evidence" value="ECO:0007669"/>
    <property type="project" value="UniProtKB-UniRule"/>
</dbReference>
<dbReference type="GO" id="GO:0032790">
    <property type="term" value="P:ribosome disassembly"/>
    <property type="evidence" value="ECO:0007669"/>
    <property type="project" value="TreeGrafter"/>
</dbReference>
<dbReference type="CDD" id="cd01886">
    <property type="entry name" value="EF-G"/>
    <property type="match status" value="1"/>
</dbReference>
<dbReference type="CDD" id="cd16262">
    <property type="entry name" value="EFG_III"/>
    <property type="match status" value="1"/>
</dbReference>
<dbReference type="CDD" id="cd01434">
    <property type="entry name" value="EFG_mtEFG1_IV"/>
    <property type="match status" value="1"/>
</dbReference>
<dbReference type="CDD" id="cd03713">
    <property type="entry name" value="EFG_mtEFG_C"/>
    <property type="match status" value="1"/>
</dbReference>
<dbReference type="CDD" id="cd04088">
    <property type="entry name" value="EFG_mtEFG_II"/>
    <property type="match status" value="1"/>
</dbReference>
<dbReference type="FunFam" id="2.40.30.10:FF:000006">
    <property type="entry name" value="Elongation factor G"/>
    <property type="match status" value="1"/>
</dbReference>
<dbReference type="FunFam" id="3.30.230.10:FF:000003">
    <property type="entry name" value="Elongation factor G"/>
    <property type="match status" value="1"/>
</dbReference>
<dbReference type="FunFam" id="3.30.70.240:FF:000001">
    <property type="entry name" value="Elongation factor G"/>
    <property type="match status" value="1"/>
</dbReference>
<dbReference type="FunFam" id="3.30.70.870:FF:000001">
    <property type="entry name" value="Elongation factor G"/>
    <property type="match status" value="1"/>
</dbReference>
<dbReference type="FunFam" id="3.40.50.300:FF:000029">
    <property type="entry name" value="Elongation factor G"/>
    <property type="match status" value="1"/>
</dbReference>
<dbReference type="Gene3D" id="3.30.230.10">
    <property type="match status" value="1"/>
</dbReference>
<dbReference type="Gene3D" id="3.30.70.240">
    <property type="match status" value="1"/>
</dbReference>
<dbReference type="Gene3D" id="3.30.70.870">
    <property type="entry name" value="Elongation Factor G (Translational Gtpase), domain 3"/>
    <property type="match status" value="1"/>
</dbReference>
<dbReference type="Gene3D" id="3.40.50.300">
    <property type="entry name" value="P-loop containing nucleotide triphosphate hydrolases"/>
    <property type="match status" value="1"/>
</dbReference>
<dbReference type="Gene3D" id="2.40.30.10">
    <property type="entry name" value="Translation factors"/>
    <property type="match status" value="1"/>
</dbReference>
<dbReference type="HAMAP" id="MF_00054_B">
    <property type="entry name" value="EF_G_EF_2_B"/>
    <property type="match status" value="1"/>
</dbReference>
<dbReference type="InterPro" id="IPR041095">
    <property type="entry name" value="EFG_II"/>
</dbReference>
<dbReference type="InterPro" id="IPR009022">
    <property type="entry name" value="EFG_III"/>
</dbReference>
<dbReference type="InterPro" id="IPR035647">
    <property type="entry name" value="EFG_III/V"/>
</dbReference>
<dbReference type="InterPro" id="IPR047872">
    <property type="entry name" value="EFG_IV"/>
</dbReference>
<dbReference type="InterPro" id="IPR035649">
    <property type="entry name" value="EFG_V"/>
</dbReference>
<dbReference type="InterPro" id="IPR000640">
    <property type="entry name" value="EFG_V-like"/>
</dbReference>
<dbReference type="InterPro" id="IPR004161">
    <property type="entry name" value="EFTu-like_2"/>
</dbReference>
<dbReference type="InterPro" id="IPR031157">
    <property type="entry name" value="G_TR_CS"/>
</dbReference>
<dbReference type="InterPro" id="IPR027417">
    <property type="entry name" value="P-loop_NTPase"/>
</dbReference>
<dbReference type="InterPro" id="IPR020568">
    <property type="entry name" value="Ribosomal_Su5_D2-typ_SF"/>
</dbReference>
<dbReference type="InterPro" id="IPR014721">
    <property type="entry name" value="Ribsml_uS5_D2-typ_fold_subgr"/>
</dbReference>
<dbReference type="InterPro" id="IPR005225">
    <property type="entry name" value="Small_GTP-bd"/>
</dbReference>
<dbReference type="InterPro" id="IPR000795">
    <property type="entry name" value="T_Tr_GTP-bd_dom"/>
</dbReference>
<dbReference type="InterPro" id="IPR009000">
    <property type="entry name" value="Transl_B-barrel_sf"/>
</dbReference>
<dbReference type="InterPro" id="IPR004540">
    <property type="entry name" value="Transl_elong_EFG/EF2"/>
</dbReference>
<dbReference type="InterPro" id="IPR005517">
    <property type="entry name" value="Transl_elong_EFG/EF2_IV"/>
</dbReference>
<dbReference type="NCBIfam" id="TIGR00484">
    <property type="entry name" value="EF-G"/>
    <property type="match status" value="1"/>
</dbReference>
<dbReference type="NCBIfam" id="NF009381">
    <property type="entry name" value="PRK12740.1-5"/>
    <property type="match status" value="1"/>
</dbReference>
<dbReference type="NCBIfam" id="TIGR00231">
    <property type="entry name" value="small_GTP"/>
    <property type="match status" value="1"/>
</dbReference>
<dbReference type="PANTHER" id="PTHR43261:SF1">
    <property type="entry name" value="RIBOSOME-RELEASING FACTOR 2, MITOCHONDRIAL"/>
    <property type="match status" value="1"/>
</dbReference>
<dbReference type="PANTHER" id="PTHR43261">
    <property type="entry name" value="TRANSLATION ELONGATION FACTOR G-RELATED"/>
    <property type="match status" value="1"/>
</dbReference>
<dbReference type="Pfam" id="PF00679">
    <property type="entry name" value="EFG_C"/>
    <property type="match status" value="1"/>
</dbReference>
<dbReference type="Pfam" id="PF14492">
    <property type="entry name" value="EFG_III"/>
    <property type="match status" value="1"/>
</dbReference>
<dbReference type="Pfam" id="PF03764">
    <property type="entry name" value="EFG_IV"/>
    <property type="match status" value="1"/>
</dbReference>
<dbReference type="Pfam" id="PF00009">
    <property type="entry name" value="GTP_EFTU"/>
    <property type="match status" value="1"/>
</dbReference>
<dbReference type="Pfam" id="PF03144">
    <property type="entry name" value="GTP_EFTU_D2"/>
    <property type="match status" value="1"/>
</dbReference>
<dbReference type="PRINTS" id="PR00315">
    <property type="entry name" value="ELONGATNFCT"/>
</dbReference>
<dbReference type="SMART" id="SM00838">
    <property type="entry name" value="EFG_C"/>
    <property type="match status" value="1"/>
</dbReference>
<dbReference type="SMART" id="SM00889">
    <property type="entry name" value="EFG_IV"/>
    <property type="match status" value="1"/>
</dbReference>
<dbReference type="SUPFAM" id="SSF54980">
    <property type="entry name" value="EF-G C-terminal domain-like"/>
    <property type="match status" value="2"/>
</dbReference>
<dbReference type="SUPFAM" id="SSF52540">
    <property type="entry name" value="P-loop containing nucleoside triphosphate hydrolases"/>
    <property type="match status" value="1"/>
</dbReference>
<dbReference type="SUPFAM" id="SSF54211">
    <property type="entry name" value="Ribosomal protein S5 domain 2-like"/>
    <property type="match status" value="1"/>
</dbReference>
<dbReference type="SUPFAM" id="SSF50447">
    <property type="entry name" value="Translation proteins"/>
    <property type="match status" value="1"/>
</dbReference>
<dbReference type="PROSITE" id="PS00301">
    <property type="entry name" value="G_TR_1"/>
    <property type="match status" value="1"/>
</dbReference>
<dbReference type="PROSITE" id="PS51722">
    <property type="entry name" value="G_TR_2"/>
    <property type="match status" value="1"/>
</dbReference>
<feature type="chain" id="PRO_0000263505" description="Elongation factor G 1">
    <location>
        <begin position="1"/>
        <end position="698"/>
    </location>
</feature>
<feature type="domain" description="tr-type G">
    <location>
        <begin position="8"/>
        <end position="290"/>
    </location>
</feature>
<feature type="binding site" evidence="1">
    <location>
        <begin position="17"/>
        <end position="24"/>
    </location>
    <ligand>
        <name>GTP</name>
        <dbReference type="ChEBI" id="CHEBI:37565"/>
    </ligand>
</feature>
<feature type="binding site" evidence="1">
    <location>
        <begin position="88"/>
        <end position="92"/>
    </location>
    <ligand>
        <name>GTP</name>
        <dbReference type="ChEBI" id="CHEBI:37565"/>
    </ligand>
</feature>
<feature type="binding site" evidence="1">
    <location>
        <begin position="142"/>
        <end position="145"/>
    </location>
    <ligand>
        <name>GTP</name>
        <dbReference type="ChEBI" id="CHEBI:37565"/>
    </ligand>
</feature>
<keyword id="KW-0963">Cytoplasm</keyword>
<keyword id="KW-0251">Elongation factor</keyword>
<keyword id="KW-0342">GTP-binding</keyword>
<keyword id="KW-0547">Nucleotide-binding</keyword>
<keyword id="KW-0648">Protein biosynthesis</keyword>
<keyword id="KW-1185">Reference proteome</keyword>
<comment type="function">
    <text evidence="1">Catalyzes the GTP-dependent ribosomal translocation step during translation elongation. During this step, the ribosome changes from the pre-translocational (PRE) to the post-translocational (POST) state as the newly formed A-site-bound peptidyl-tRNA and P-site-bound deacylated tRNA move to the P and E sites, respectively. Catalyzes the coordinated movement of the two tRNA molecules, the mRNA and conformational changes in the ribosome.</text>
</comment>
<comment type="subcellular location">
    <subcellularLocation>
        <location evidence="1">Cytoplasm</location>
    </subcellularLocation>
</comment>
<comment type="similarity">
    <text evidence="1">Belongs to the TRAFAC class translation factor GTPase superfamily. Classic translation factor GTPase family. EF-G/EF-2 subfamily.</text>
</comment>
<organism>
    <name type="scientific">Shewanella frigidimarina (strain NCIMB 400)</name>
    <dbReference type="NCBI Taxonomy" id="318167"/>
    <lineage>
        <taxon>Bacteria</taxon>
        <taxon>Pseudomonadati</taxon>
        <taxon>Pseudomonadota</taxon>
        <taxon>Gammaproteobacteria</taxon>
        <taxon>Alteromonadales</taxon>
        <taxon>Shewanellaceae</taxon>
        <taxon>Shewanella</taxon>
    </lineage>
</organism>
<evidence type="ECO:0000255" key="1">
    <source>
        <dbReference type="HAMAP-Rule" id="MF_00054"/>
    </source>
</evidence>
<protein>
    <recommendedName>
        <fullName evidence="1">Elongation factor G 1</fullName>
        <shortName evidence="1">EF-G 1</shortName>
    </recommendedName>
</protein>
<reference key="1">
    <citation type="submission" date="2006-08" db="EMBL/GenBank/DDBJ databases">
        <title>Complete sequence of Shewanella frigidimarina NCIMB 400.</title>
        <authorList>
            <consortium name="US DOE Joint Genome Institute"/>
            <person name="Copeland A."/>
            <person name="Lucas S."/>
            <person name="Lapidus A."/>
            <person name="Barry K."/>
            <person name="Detter J.C."/>
            <person name="Glavina del Rio T."/>
            <person name="Hammon N."/>
            <person name="Israni S."/>
            <person name="Dalin E."/>
            <person name="Tice H."/>
            <person name="Pitluck S."/>
            <person name="Fredrickson J.K."/>
            <person name="Kolker E."/>
            <person name="McCuel L.A."/>
            <person name="DiChristina T."/>
            <person name="Nealson K.H."/>
            <person name="Newman D."/>
            <person name="Tiedje J.M."/>
            <person name="Zhou J."/>
            <person name="Romine M.F."/>
            <person name="Culley D.E."/>
            <person name="Serres M."/>
            <person name="Chertkov O."/>
            <person name="Brettin T."/>
            <person name="Bruce D."/>
            <person name="Han C."/>
            <person name="Tapia R."/>
            <person name="Gilna P."/>
            <person name="Schmutz J."/>
            <person name="Larimer F."/>
            <person name="Land M."/>
            <person name="Hauser L."/>
            <person name="Kyrpides N."/>
            <person name="Mikhailova N."/>
            <person name="Richardson P."/>
        </authorList>
    </citation>
    <scope>NUCLEOTIDE SEQUENCE [LARGE SCALE GENOMIC DNA]</scope>
    <source>
        <strain>NCIMB 400</strain>
    </source>
</reference>
<name>EFG1_SHEFN</name>
<sequence length="698" mass="76927">MARTTPIERYRNIGIVAHVDAGKTTTTERVLFYTGMSHKIGEVHDGAATTDWMVQEQERGITITSAAVTTFWRGMEAQFAEHRINIIDTPGHVDFTIEVERSLRVLDGAVVVFCGSSGVEPQSETVWRQADKYHVPRLVFVNKMDRAGADFDRVINQIRNRLGATCVPIQLNIGAEENFKGVIDLIKMKAINWSETDQGMTFTYEDIPANLAAKAAEMHEYLVEAAAEASDELMNKYLEEGELSEVEIKTALRQRTINNEIVLATCGSAFKNKGVQAVLDAVVDFLPAPIDVPAITGIDESENEVKRPPDDNAPFAALAFKIATDPFVGTLTFIRVYSGVLESGAGVYNSVKQKRERVGRIVQMHANDRTELKEVRAGDIAAAIGLKDVTTGDTLCDNNHRVILERMDFPEPVITIAVEPRSKADQDKMGIALQKLAAEDPSFKVETDEESAQTLISGMGELHLDIIVDRMRREFGVECNVGKPQVAYRETIRSKVEVEGKFVRQSGGRGQFGHVWLRIEPLEEGAGYEFVNEIVGGVVPREFIPAVDKGIQEQMKNGVLAGYPVLDVRVSLFDGSYHDVDSNEMAFKIAGSMGFKKGALEATPVLLEPCMKVEVTTPEDYMGDVVGDLNRRRGIIEGMDDGIAGVKLVHAVVPLSEMFGYATDLRSASQGRASYSMEFLKYTDAPQNIAKAIIESRN</sequence>
<gene>
    <name evidence="1" type="primary">fusA1</name>
    <name type="ordered locus">Sfri_0145</name>
</gene>